<name>RL33_SHESW</name>
<proteinExistence type="inferred from homology"/>
<sequence>MAKAKGNREKIKLVSSAKTGHFYTTEKNKRNMPEKMEIKKFDPVIRQHVIYKEAKIK</sequence>
<accession>A1REU6</accession>
<keyword id="KW-0687">Ribonucleoprotein</keyword>
<keyword id="KW-0689">Ribosomal protein</keyword>
<reference key="1">
    <citation type="submission" date="2006-12" db="EMBL/GenBank/DDBJ databases">
        <title>Complete sequence of Shewanella sp. W3-18-1.</title>
        <authorList>
            <consortium name="US DOE Joint Genome Institute"/>
            <person name="Copeland A."/>
            <person name="Lucas S."/>
            <person name="Lapidus A."/>
            <person name="Barry K."/>
            <person name="Detter J.C."/>
            <person name="Glavina del Rio T."/>
            <person name="Hammon N."/>
            <person name="Israni S."/>
            <person name="Dalin E."/>
            <person name="Tice H."/>
            <person name="Pitluck S."/>
            <person name="Chain P."/>
            <person name="Malfatti S."/>
            <person name="Shin M."/>
            <person name="Vergez L."/>
            <person name="Schmutz J."/>
            <person name="Larimer F."/>
            <person name="Land M."/>
            <person name="Hauser L."/>
            <person name="Kyrpides N."/>
            <person name="Lykidis A."/>
            <person name="Tiedje J."/>
            <person name="Richardson P."/>
        </authorList>
    </citation>
    <scope>NUCLEOTIDE SEQUENCE [LARGE SCALE GENOMIC DNA]</scope>
    <source>
        <strain>W3-18-1</strain>
    </source>
</reference>
<organism>
    <name type="scientific">Shewanella sp. (strain W3-18-1)</name>
    <dbReference type="NCBI Taxonomy" id="351745"/>
    <lineage>
        <taxon>Bacteria</taxon>
        <taxon>Pseudomonadati</taxon>
        <taxon>Pseudomonadota</taxon>
        <taxon>Gammaproteobacteria</taxon>
        <taxon>Alteromonadales</taxon>
        <taxon>Shewanellaceae</taxon>
        <taxon>Shewanella</taxon>
    </lineage>
</organism>
<comment type="similarity">
    <text evidence="1">Belongs to the bacterial ribosomal protein bL33 family.</text>
</comment>
<feature type="chain" id="PRO_0000356667" description="Large ribosomal subunit protein bL33">
    <location>
        <begin position="1"/>
        <end position="57"/>
    </location>
</feature>
<gene>
    <name evidence="1" type="primary">rpmG</name>
    <name type="ordered locus">Sputw3181_0340</name>
</gene>
<protein>
    <recommendedName>
        <fullName evidence="1">Large ribosomal subunit protein bL33</fullName>
    </recommendedName>
    <alternativeName>
        <fullName evidence="2">50S ribosomal protein L33</fullName>
    </alternativeName>
</protein>
<evidence type="ECO:0000255" key="1">
    <source>
        <dbReference type="HAMAP-Rule" id="MF_00294"/>
    </source>
</evidence>
<evidence type="ECO:0000305" key="2"/>
<dbReference type="EMBL" id="CP000503">
    <property type="protein sequence ID" value="ABM23191.1"/>
    <property type="molecule type" value="Genomic_DNA"/>
</dbReference>
<dbReference type="RefSeq" id="WP_007651290.1">
    <property type="nucleotide sequence ID" value="NC_008750.1"/>
</dbReference>
<dbReference type="SMR" id="A1REU6"/>
<dbReference type="GeneID" id="67441923"/>
<dbReference type="KEGG" id="shw:Sputw3181_0340"/>
<dbReference type="HOGENOM" id="CLU_190949_1_1_6"/>
<dbReference type="Proteomes" id="UP000002597">
    <property type="component" value="Chromosome"/>
</dbReference>
<dbReference type="GO" id="GO:0022625">
    <property type="term" value="C:cytosolic large ribosomal subunit"/>
    <property type="evidence" value="ECO:0007669"/>
    <property type="project" value="TreeGrafter"/>
</dbReference>
<dbReference type="GO" id="GO:0003735">
    <property type="term" value="F:structural constituent of ribosome"/>
    <property type="evidence" value="ECO:0007669"/>
    <property type="project" value="InterPro"/>
</dbReference>
<dbReference type="GO" id="GO:0006412">
    <property type="term" value="P:translation"/>
    <property type="evidence" value="ECO:0007669"/>
    <property type="project" value="UniProtKB-UniRule"/>
</dbReference>
<dbReference type="FunFam" id="2.20.28.120:FF:000001">
    <property type="entry name" value="50S ribosomal protein L33"/>
    <property type="match status" value="1"/>
</dbReference>
<dbReference type="Gene3D" id="2.20.28.120">
    <property type="entry name" value="Ribosomal protein L33"/>
    <property type="match status" value="1"/>
</dbReference>
<dbReference type="HAMAP" id="MF_00294">
    <property type="entry name" value="Ribosomal_bL33"/>
    <property type="match status" value="1"/>
</dbReference>
<dbReference type="InterPro" id="IPR001705">
    <property type="entry name" value="Ribosomal_bL33"/>
</dbReference>
<dbReference type="InterPro" id="IPR018264">
    <property type="entry name" value="Ribosomal_bL33_CS"/>
</dbReference>
<dbReference type="InterPro" id="IPR038584">
    <property type="entry name" value="Ribosomal_bL33_sf"/>
</dbReference>
<dbReference type="InterPro" id="IPR011332">
    <property type="entry name" value="Ribosomal_zn-bd"/>
</dbReference>
<dbReference type="NCBIfam" id="NF001860">
    <property type="entry name" value="PRK00595.1"/>
    <property type="match status" value="1"/>
</dbReference>
<dbReference type="NCBIfam" id="TIGR01023">
    <property type="entry name" value="rpmG_bact"/>
    <property type="match status" value="1"/>
</dbReference>
<dbReference type="PANTHER" id="PTHR15238">
    <property type="entry name" value="54S RIBOSOMAL PROTEIN L39, MITOCHONDRIAL"/>
    <property type="match status" value="1"/>
</dbReference>
<dbReference type="PANTHER" id="PTHR15238:SF1">
    <property type="entry name" value="LARGE RIBOSOMAL SUBUNIT PROTEIN BL33M"/>
    <property type="match status" value="1"/>
</dbReference>
<dbReference type="Pfam" id="PF00471">
    <property type="entry name" value="Ribosomal_L33"/>
    <property type="match status" value="1"/>
</dbReference>
<dbReference type="SUPFAM" id="SSF57829">
    <property type="entry name" value="Zn-binding ribosomal proteins"/>
    <property type="match status" value="1"/>
</dbReference>
<dbReference type="PROSITE" id="PS00582">
    <property type="entry name" value="RIBOSOMAL_L33"/>
    <property type="match status" value="1"/>
</dbReference>